<protein>
    <recommendedName>
        <fullName evidence="1">Homoserine kinase</fullName>
        <shortName evidence="1">HK</shortName>
        <shortName evidence="1">HSK</shortName>
        <ecNumber evidence="1">2.7.1.39</ecNumber>
    </recommendedName>
</protein>
<sequence>MVKVYAPASSANMSVGFDVLGAAVTPVDGALLGDVVTVEAAETFSLNNLGRFADKLPSEPRENIVYQCWERFCQELGKQIPVAMTLEKNMPIGSGLGSSACSVVAALMAMNEHCGKPLNDTRLLALMGELEGRISGSIHYDNVAPCFLGGMQLMIEENDIISQQVPGFDEWLWVLAYPGIKVSTAEARAILPAQYRRQDCIAHGRHLAGFIHACYSRQPELAAKLMKDVIAEPYRERLLPGFRQARQAVAEIGAVASGISGSGPTLFALCDKPETAQRVADWLGKNYLQNQEGFVHICRLDTAGARVLEN</sequence>
<gene>
    <name evidence="1" type="primary">thrB</name>
    <name type="ordered locus">BWG_0003</name>
</gene>
<keyword id="KW-0028">Amino-acid biosynthesis</keyword>
<keyword id="KW-0067">ATP-binding</keyword>
<keyword id="KW-0963">Cytoplasm</keyword>
<keyword id="KW-0418">Kinase</keyword>
<keyword id="KW-0547">Nucleotide-binding</keyword>
<keyword id="KW-0791">Threonine biosynthesis</keyword>
<keyword id="KW-0808">Transferase</keyword>
<accession>C4ZPT0</accession>
<reference key="1">
    <citation type="journal article" date="2009" name="J. Bacteriol.">
        <title>Genomic sequencing reveals regulatory mutations and recombinational events in the widely used MC4100 lineage of Escherichia coli K-12.</title>
        <authorList>
            <person name="Ferenci T."/>
            <person name="Zhou Z."/>
            <person name="Betteridge T."/>
            <person name="Ren Y."/>
            <person name="Liu Y."/>
            <person name="Feng L."/>
            <person name="Reeves P.R."/>
            <person name="Wang L."/>
        </authorList>
    </citation>
    <scope>NUCLEOTIDE SEQUENCE [LARGE SCALE GENOMIC DNA]</scope>
    <source>
        <strain>K12 / MC4100 / BW2952</strain>
    </source>
</reference>
<comment type="function">
    <text evidence="1">Catalyzes the ATP-dependent phosphorylation of L-homoserine to L-homoserine phosphate.</text>
</comment>
<comment type="catalytic activity">
    <reaction evidence="1">
        <text>L-homoserine + ATP = O-phospho-L-homoserine + ADP + H(+)</text>
        <dbReference type="Rhea" id="RHEA:13985"/>
        <dbReference type="ChEBI" id="CHEBI:15378"/>
        <dbReference type="ChEBI" id="CHEBI:30616"/>
        <dbReference type="ChEBI" id="CHEBI:57476"/>
        <dbReference type="ChEBI" id="CHEBI:57590"/>
        <dbReference type="ChEBI" id="CHEBI:456216"/>
        <dbReference type="EC" id="2.7.1.39"/>
    </reaction>
</comment>
<comment type="pathway">
    <text evidence="1">Amino-acid biosynthesis; L-threonine biosynthesis; L-threonine from L-aspartate: step 4/5.</text>
</comment>
<comment type="subcellular location">
    <subcellularLocation>
        <location evidence="1">Cytoplasm</location>
    </subcellularLocation>
</comment>
<comment type="similarity">
    <text evidence="1">Belongs to the GHMP kinase family. Homoserine kinase subfamily.</text>
</comment>
<dbReference type="EC" id="2.7.1.39" evidence="1"/>
<dbReference type="EMBL" id="CP001396">
    <property type="protein sequence ID" value="ACR63428.1"/>
    <property type="molecule type" value="Genomic_DNA"/>
</dbReference>
<dbReference type="RefSeq" id="WP_000241662.1">
    <property type="nucleotide sequence ID" value="NC_012759.1"/>
</dbReference>
<dbReference type="SMR" id="C4ZPT0"/>
<dbReference type="KEGG" id="ebw:BWG_0003"/>
<dbReference type="HOGENOM" id="CLU_041243_1_1_6"/>
<dbReference type="UniPathway" id="UPA00050">
    <property type="reaction ID" value="UER00064"/>
</dbReference>
<dbReference type="GO" id="GO:0005737">
    <property type="term" value="C:cytoplasm"/>
    <property type="evidence" value="ECO:0007669"/>
    <property type="project" value="UniProtKB-SubCell"/>
</dbReference>
<dbReference type="GO" id="GO:0005524">
    <property type="term" value="F:ATP binding"/>
    <property type="evidence" value="ECO:0007669"/>
    <property type="project" value="UniProtKB-UniRule"/>
</dbReference>
<dbReference type="GO" id="GO:0004413">
    <property type="term" value="F:homoserine kinase activity"/>
    <property type="evidence" value="ECO:0007669"/>
    <property type="project" value="UniProtKB-UniRule"/>
</dbReference>
<dbReference type="GO" id="GO:0009088">
    <property type="term" value="P:threonine biosynthetic process"/>
    <property type="evidence" value="ECO:0007669"/>
    <property type="project" value="UniProtKB-UniRule"/>
</dbReference>
<dbReference type="FunFam" id="3.30.230.10:FF:000020">
    <property type="entry name" value="Homoserine kinase"/>
    <property type="match status" value="1"/>
</dbReference>
<dbReference type="FunFam" id="3.30.70.890:FF:000002">
    <property type="entry name" value="Homoserine kinase"/>
    <property type="match status" value="1"/>
</dbReference>
<dbReference type="Gene3D" id="3.30.230.10">
    <property type="match status" value="1"/>
</dbReference>
<dbReference type="Gene3D" id="3.30.70.890">
    <property type="entry name" value="GHMP kinase, C-terminal domain"/>
    <property type="match status" value="1"/>
</dbReference>
<dbReference type="HAMAP" id="MF_00384">
    <property type="entry name" value="Homoser_kinase"/>
    <property type="match status" value="1"/>
</dbReference>
<dbReference type="InterPro" id="IPR013750">
    <property type="entry name" value="GHMP_kinase_C_dom"/>
</dbReference>
<dbReference type="InterPro" id="IPR036554">
    <property type="entry name" value="GHMP_kinase_C_sf"/>
</dbReference>
<dbReference type="InterPro" id="IPR006204">
    <property type="entry name" value="GHMP_kinase_N_dom"/>
</dbReference>
<dbReference type="InterPro" id="IPR006203">
    <property type="entry name" value="GHMP_knse_ATP-bd_CS"/>
</dbReference>
<dbReference type="InterPro" id="IPR000870">
    <property type="entry name" value="Homoserine_kinase"/>
</dbReference>
<dbReference type="InterPro" id="IPR020568">
    <property type="entry name" value="Ribosomal_Su5_D2-typ_SF"/>
</dbReference>
<dbReference type="InterPro" id="IPR014721">
    <property type="entry name" value="Ribsml_uS5_D2-typ_fold_subgr"/>
</dbReference>
<dbReference type="NCBIfam" id="NF002288">
    <property type="entry name" value="PRK01212.1-4"/>
    <property type="match status" value="1"/>
</dbReference>
<dbReference type="NCBIfam" id="TIGR00191">
    <property type="entry name" value="thrB"/>
    <property type="match status" value="1"/>
</dbReference>
<dbReference type="PANTHER" id="PTHR20861:SF1">
    <property type="entry name" value="HOMOSERINE KINASE"/>
    <property type="match status" value="1"/>
</dbReference>
<dbReference type="PANTHER" id="PTHR20861">
    <property type="entry name" value="HOMOSERINE/4-DIPHOSPHOCYTIDYL-2-C-METHYL-D-ERYTHRITOL KINASE"/>
    <property type="match status" value="1"/>
</dbReference>
<dbReference type="Pfam" id="PF08544">
    <property type="entry name" value="GHMP_kinases_C"/>
    <property type="match status" value="1"/>
</dbReference>
<dbReference type="Pfam" id="PF00288">
    <property type="entry name" value="GHMP_kinases_N"/>
    <property type="match status" value="1"/>
</dbReference>
<dbReference type="PIRSF" id="PIRSF000676">
    <property type="entry name" value="Homoser_kin"/>
    <property type="match status" value="1"/>
</dbReference>
<dbReference type="PRINTS" id="PR00958">
    <property type="entry name" value="HOMSERKINASE"/>
</dbReference>
<dbReference type="SUPFAM" id="SSF55060">
    <property type="entry name" value="GHMP Kinase, C-terminal domain"/>
    <property type="match status" value="1"/>
</dbReference>
<dbReference type="SUPFAM" id="SSF54211">
    <property type="entry name" value="Ribosomal protein S5 domain 2-like"/>
    <property type="match status" value="1"/>
</dbReference>
<dbReference type="PROSITE" id="PS00627">
    <property type="entry name" value="GHMP_KINASES_ATP"/>
    <property type="match status" value="1"/>
</dbReference>
<proteinExistence type="inferred from homology"/>
<evidence type="ECO:0000255" key="1">
    <source>
        <dbReference type="HAMAP-Rule" id="MF_00384"/>
    </source>
</evidence>
<organism>
    <name type="scientific">Escherichia coli (strain K12 / MC4100 / BW2952)</name>
    <dbReference type="NCBI Taxonomy" id="595496"/>
    <lineage>
        <taxon>Bacteria</taxon>
        <taxon>Pseudomonadati</taxon>
        <taxon>Pseudomonadota</taxon>
        <taxon>Gammaproteobacteria</taxon>
        <taxon>Enterobacterales</taxon>
        <taxon>Enterobacteriaceae</taxon>
        <taxon>Escherichia</taxon>
    </lineage>
</organism>
<feature type="chain" id="PRO_1000205733" description="Homoserine kinase">
    <location>
        <begin position="1"/>
        <end position="310"/>
    </location>
</feature>
<feature type="binding site" evidence="1">
    <location>
        <begin position="91"/>
        <end position="101"/>
    </location>
    <ligand>
        <name>ATP</name>
        <dbReference type="ChEBI" id="CHEBI:30616"/>
    </ligand>
</feature>
<name>KHSE_ECOBW</name>